<sequence length="244" mass="27466">MGHKVHPTGIRLGIAKDWNSKWYANKAEFASYLAADLKVREMLRKKLAQAGVSKILIERPAKTARVTIHTARPGVVIGKRGEDIEKLRKEVSQLMGVPAHINVTEVRKPELDAQLVAESIAQQLERRIMFRRAMKRSVGNAMRLGALGIKVNVAGRLNGAEIARSEWYREGRVPLHTLRADIDYGFAEASTTYGIIGIKVWIYKGEVFDFSQVGQEKQDDSPRNDRNDRGDRGDRPSRPAREAR</sequence>
<keyword id="KW-0687">Ribonucleoprotein</keyword>
<keyword id="KW-0689">Ribosomal protein</keyword>
<keyword id="KW-0694">RNA-binding</keyword>
<keyword id="KW-0699">rRNA-binding</keyword>
<organism>
    <name type="scientific">Xanthomonas euvesicatoria pv. vesicatoria (strain 85-10)</name>
    <name type="common">Xanthomonas campestris pv. vesicatoria</name>
    <dbReference type="NCBI Taxonomy" id="316273"/>
    <lineage>
        <taxon>Bacteria</taxon>
        <taxon>Pseudomonadati</taxon>
        <taxon>Pseudomonadota</taxon>
        <taxon>Gammaproteobacteria</taxon>
        <taxon>Lysobacterales</taxon>
        <taxon>Lysobacteraceae</taxon>
        <taxon>Xanthomonas</taxon>
    </lineage>
</organism>
<gene>
    <name evidence="1" type="primary">rpsC</name>
    <name type="ordered locus">XCV1005</name>
</gene>
<protein>
    <recommendedName>
        <fullName evidence="1">Small ribosomal subunit protein uS3</fullName>
    </recommendedName>
    <alternativeName>
        <fullName evidence="3">30S ribosomal protein S3</fullName>
    </alternativeName>
</protein>
<comment type="function">
    <text evidence="1">Binds the lower part of the 30S subunit head. Binds mRNA in the 70S ribosome, positioning it for translation.</text>
</comment>
<comment type="subunit">
    <text evidence="1">Part of the 30S ribosomal subunit. Forms a tight complex with proteins S10 and S14.</text>
</comment>
<comment type="similarity">
    <text evidence="1">Belongs to the universal ribosomal protein uS3 family.</text>
</comment>
<dbReference type="EMBL" id="AM039952">
    <property type="protein sequence ID" value="CAJ22636.1"/>
    <property type="molecule type" value="Genomic_DNA"/>
</dbReference>
<dbReference type="RefSeq" id="WP_008571670.1">
    <property type="nucleotide sequence ID" value="NZ_CP017190.1"/>
</dbReference>
<dbReference type="SMR" id="Q3BWX7"/>
<dbReference type="STRING" id="456327.BJD11_17710"/>
<dbReference type="GeneID" id="97509342"/>
<dbReference type="KEGG" id="xcv:XCV1005"/>
<dbReference type="eggNOG" id="COG0092">
    <property type="taxonomic scope" value="Bacteria"/>
</dbReference>
<dbReference type="HOGENOM" id="CLU_058591_0_2_6"/>
<dbReference type="Proteomes" id="UP000007069">
    <property type="component" value="Chromosome"/>
</dbReference>
<dbReference type="GO" id="GO:0022627">
    <property type="term" value="C:cytosolic small ribosomal subunit"/>
    <property type="evidence" value="ECO:0007669"/>
    <property type="project" value="TreeGrafter"/>
</dbReference>
<dbReference type="GO" id="GO:0003729">
    <property type="term" value="F:mRNA binding"/>
    <property type="evidence" value="ECO:0007669"/>
    <property type="project" value="UniProtKB-UniRule"/>
</dbReference>
<dbReference type="GO" id="GO:0019843">
    <property type="term" value="F:rRNA binding"/>
    <property type="evidence" value="ECO:0007669"/>
    <property type="project" value="UniProtKB-UniRule"/>
</dbReference>
<dbReference type="GO" id="GO:0003735">
    <property type="term" value="F:structural constituent of ribosome"/>
    <property type="evidence" value="ECO:0007669"/>
    <property type="project" value="InterPro"/>
</dbReference>
<dbReference type="GO" id="GO:0006412">
    <property type="term" value="P:translation"/>
    <property type="evidence" value="ECO:0007669"/>
    <property type="project" value="UniProtKB-UniRule"/>
</dbReference>
<dbReference type="CDD" id="cd02412">
    <property type="entry name" value="KH-II_30S_S3"/>
    <property type="match status" value="1"/>
</dbReference>
<dbReference type="FunFam" id="3.30.1140.32:FF:000001">
    <property type="entry name" value="30S ribosomal protein S3"/>
    <property type="match status" value="1"/>
</dbReference>
<dbReference type="FunFam" id="3.30.300.20:FF:000001">
    <property type="entry name" value="30S ribosomal protein S3"/>
    <property type="match status" value="1"/>
</dbReference>
<dbReference type="Gene3D" id="3.30.300.20">
    <property type="match status" value="1"/>
</dbReference>
<dbReference type="Gene3D" id="3.30.1140.32">
    <property type="entry name" value="Ribosomal protein S3, C-terminal domain"/>
    <property type="match status" value="1"/>
</dbReference>
<dbReference type="HAMAP" id="MF_01309_B">
    <property type="entry name" value="Ribosomal_uS3_B"/>
    <property type="match status" value="1"/>
</dbReference>
<dbReference type="InterPro" id="IPR004087">
    <property type="entry name" value="KH_dom"/>
</dbReference>
<dbReference type="InterPro" id="IPR015946">
    <property type="entry name" value="KH_dom-like_a/b"/>
</dbReference>
<dbReference type="InterPro" id="IPR004044">
    <property type="entry name" value="KH_dom_type_2"/>
</dbReference>
<dbReference type="InterPro" id="IPR009019">
    <property type="entry name" value="KH_sf_prok-type"/>
</dbReference>
<dbReference type="InterPro" id="IPR036419">
    <property type="entry name" value="Ribosomal_S3_C_sf"/>
</dbReference>
<dbReference type="InterPro" id="IPR005704">
    <property type="entry name" value="Ribosomal_uS3_bac-typ"/>
</dbReference>
<dbReference type="InterPro" id="IPR001351">
    <property type="entry name" value="Ribosomal_uS3_C"/>
</dbReference>
<dbReference type="InterPro" id="IPR018280">
    <property type="entry name" value="Ribosomal_uS3_CS"/>
</dbReference>
<dbReference type="NCBIfam" id="TIGR01009">
    <property type="entry name" value="rpsC_bact"/>
    <property type="match status" value="1"/>
</dbReference>
<dbReference type="PANTHER" id="PTHR11760">
    <property type="entry name" value="30S/40S RIBOSOMAL PROTEIN S3"/>
    <property type="match status" value="1"/>
</dbReference>
<dbReference type="PANTHER" id="PTHR11760:SF19">
    <property type="entry name" value="SMALL RIBOSOMAL SUBUNIT PROTEIN US3C"/>
    <property type="match status" value="1"/>
</dbReference>
<dbReference type="Pfam" id="PF07650">
    <property type="entry name" value="KH_2"/>
    <property type="match status" value="1"/>
</dbReference>
<dbReference type="Pfam" id="PF00189">
    <property type="entry name" value="Ribosomal_S3_C"/>
    <property type="match status" value="1"/>
</dbReference>
<dbReference type="SMART" id="SM00322">
    <property type="entry name" value="KH"/>
    <property type="match status" value="1"/>
</dbReference>
<dbReference type="SUPFAM" id="SSF54814">
    <property type="entry name" value="Prokaryotic type KH domain (KH-domain type II)"/>
    <property type="match status" value="1"/>
</dbReference>
<dbReference type="SUPFAM" id="SSF54821">
    <property type="entry name" value="Ribosomal protein S3 C-terminal domain"/>
    <property type="match status" value="1"/>
</dbReference>
<dbReference type="PROSITE" id="PS50823">
    <property type="entry name" value="KH_TYPE_2"/>
    <property type="match status" value="1"/>
</dbReference>
<dbReference type="PROSITE" id="PS00548">
    <property type="entry name" value="RIBOSOMAL_S3"/>
    <property type="match status" value="1"/>
</dbReference>
<evidence type="ECO:0000255" key="1">
    <source>
        <dbReference type="HAMAP-Rule" id="MF_01309"/>
    </source>
</evidence>
<evidence type="ECO:0000256" key="2">
    <source>
        <dbReference type="SAM" id="MobiDB-lite"/>
    </source>
</evidence>
<evidence type="ECO:0000305" key="3"/>
<proteinExistence type="inferred from homology"/>
<feature type="chain" id="PRO_0000230743" description="Small ribosomal subunit protein uS3">
    <location>
        <begin position="1"/>
        <end position="244"/>
    </location>
</feature>
<feature type="domain" description="KH type-2" evidence="1">
    <location>
        <begin position="39"/>
        <end position="107"/>
    </location>
</feature>
<feature type="region of interest" description="Disordered" evidence="2">
    <location>
        <begin position="213"/>
        <end position="244"/>
    </location>
</feature>
<feature type="compositionally biased region" description="Basic and acidic residues" evidence="2">
    <location>
        <begin position="216"/>
        <end position="244"/>
    </location>
</feature>
<accession>Q3BWX7</accession>
<reference key="1">
    <citation type="journal article" date="2005" name="J. Bacteriol.">
        <title>Insights into genome plasticity and pathogenicity of the plant pathogenic Bacterium Xanthomonas campestris pv. vesicatoria revealed by the complete genome sequence.</title>
        <authorList>
            <person name="Thieme F."/>
            <person name="Koebnik R."/>
            <person name="Bekel T."/>
            <person name="Berger C."/>
            <person name="Boch J."/>
            <person name="Buettner D."/>
            <person name="Caldana C."/>
            <person name="Gaigalat L."/>
            <person name="Goesmann A."/>
            <person name="Kay S."/>
            <person name="Kirchner O."/>
            <person name="Lanz C."/>
            <person name="Linke B."/>
            <person name="McHardy A.C."/>
            <person name="Meyer F."/>
            <person name="Mittenhuber G."/>
            <person name="Nies D.H."/>
            <person name="Niesbach-Kloesgen U."/>
            <person name="Patschkowski T."/>
            <person name="Rueckert C."/>
            <person name="Rupp O."/>
            <person name="Schneiker S."/>
            <person name="Schuster S.C."/>
            <person name="Vorhoelter F.J."/>
            <person name="Weber E."/>
            <person name="Puehler A."/>
            <person name="Bonas U."/>
            <person name="Bartels D."/>
            <person name="Kaiser O."/>
        </authorList>
    </citation>
    <scope>NUCLEOTIDE SEQUENCE [LARGE SCALE GENOMIC DNA]</scope>
    <source>
        <strain>85-10</strain>
    </source>
</reference>
<name>RS3_XANE5</name>